<evidence type="ECO:0000250" key="1"/>
<evidence type="ECO:0000305" key="2"/>
<dbReference type="EC" id="1.1.1.85"/>
<dbReference type="EMBL" id="U83626">
    <property type="protein sequence ID" value="AAD00548.2"/>
    <property type="molecule type" value="Genomic_DNA"/>
</dbReference>
<dbReference type="EMBL" id="CP000502">
    <property type="protein sequence ID" value="ABN68719.2"/>
    <property type="molecule type" value="Genomic_DNA"/>
</dbReference>
<dbReference type="RefSeq" id="XP_001386748.2">
    <property type="nucleotide sequence ID" value="XM_001386711.1"/>
</dbReference>
<dbReference type="SMR" id="O94114"/>
<dbReference type="FunCoup" id="O94114">
    <property type="interactions" value="938"/>
</dbReference>
<dbReference type="STRING" id="322104.O94114"/>
<dbReference type="GeneID" id="4841123"/>
<dbReference type="KEGG" id="pic:PICST_68561"/>
<dbReference type="eggNOG" id="KOG0786">
    <property type="taxonomic scope" value="Eukaryota"/>
</dbReference>
<dbReference type="HOGENOM" id="CLU_031953_0_3_1"/>
<dbReference type="InParanoid" id="O94114"/>
<dbReference type="OMA" id="EYDLGAR"/>
<dbReference type="OrthoDB" id="419183at2759"/>
<dbReference type="BRENDA" id="1.1.1.85">
    <property type="organism ID" value="4832"/>
</dbReference>
<dbReference type="UniPathway" id="UPA00048">
    <property type="reaction ID" value="UER00072"/>
</dbReference>
<dbReference type="Proteomes" id="UP000002258">
    <property type="component" value="Chromosome 8"/>
</dbReference>
<dbReference type="GO" id="GO:0005829">
    <property type="term" value="C:cytosol"/>
    <property type="evidence" value="ECO:0007669"/>
    <property type="project" value="EnsemblFungi"/>
</dbReference>
<dbReference type="GO" id="GO:0003862">
    <property type="term" value="F:3-isopropylmalate dehydrogenase activity"/>
    <property type="evidence" value="ECO:0007669"/>
    <property type="project" value="UniProtKB-EC"/>
</dbReference>
<dbReference type="GO" id="GO:0000287">
    <property type="term" value="F:magnesium ion binding"/>
    <property type="evidence" value="ECO:0007669"/>
    <property type="project" value="InterPro"/>
</dbReference>
<dbReference type="GO" id="GO:0051287">
    <property type="term" value="F:NAD binding"/>
    <property type="evidence" value="ECO:0007669"/>
    <property type="project" value="InterPro"/>
</dbReference>
<dbReference type="GO" id="GO:0009098">
    <property type="term" value="P:L-leucine biosynthetic process"/>
    <property type="evidence" value="ECO:0007669"/>
    <property type="project" value="UniProtKB-UniPathway"/>
</dbReference>
<dbReference type="FunFam" id="3.40.718.10:FF:000006">
    <property type="entry name" value="3-isopropylmalate dehydrogenase"/>
    <property type="match status" value="1"/>
</dbReference>
<dbReference type="Gene3D" id="3.40.718.10">
    <property type="entry name" value="Isopropylmalate Dehydrogenase"/>
    <property type="match status" value="1"/>
</dbReference>
<dbReference type="InterPro" id="IPR019818">
    <property type="entry name" value="IsoCit/isopropylmalate_DH_CS"/>
</dbReference>
<dbReference type="InterPro" id="IPR024084">
    <property type="entry name" value="IsoPropMal-DH-like_dom"/>
</dbReference>
<dbReference type="InterPro" id="IPR004429">
    <property type="entry name" value="Isopropylmalate_DH"/>
</dbReference>
<dbReference type="NCBIfam" id="TIGR00169">
    <property type="entry name" value="leuB"/>
    <property type="match status" value="1"/>
</dbReference>
<dbReference type="PANTHER" id="PTHR42979">
    <property type="entry name" value="3-ISOPROPYLMALATE DEHYDROGENASE"/>
    <property type="match status" value="1"/>
</dbReference>
<dbReference type="PANTHER" id="PTHR42979:SF1">
    <property type="entry name" value="3-ISOPROPYLMALATE DEHYDROGENASE"/>
    <property type="match status" value="1"/>
</dbReference>
<dbReference type="Pfam" id="PF00180">
    <property type="entry name" value="Iso_dh"/>
    <property type="match status" value="1"/>
</dbReference>
<dbReference type="SMART" id="SM01329">
    <property type="entry name" value="Iso_dh"/>
    <property type="match status" value="1"/>
</dbReference>
<dbReference type="SUPFAM" id="SSF53659">
    <property type="entry name" value="Isocitrate/Isopropylmalate dehydrogenase-like"/>
    <property type="match status" value="1"/>
</dbReference>
<dbReference type="PROSITE" id="PS00470">
    <property type="entry name" value="IDH_IMDH"/>
    <property type="match status" value="1"/>
</dbReference>
<gene>
    <name type="primary">LEU2</name>
    <name type="ORF">PICST_68561</name>
</gene>
<comment type="function">
    <text>Catalyzes the oxidation of 3-carboxy-2-hydroxy-4-methylpentanoate (3-isopropylmalate) to 3-carboxy-4-methyl-2-oxopentanoate. The product decarboxylates to 4-methyl-2 oxopentanoate.</text>
</comment>
<comment type="catalytic activity">
    <reaction>
        <text>(2R,3S)-3-isopropylmalate + NAD(+) = 4-methyl-2-oxopentanoate + CO2 + NADH</text>
        <dbReference type="Rhea" id="RHEA:32271"/>
        <dbReference type="ChEBI" id="CHEBI:16526"/>
        <dbReference type="ChEBI" id="CHEBI:17865"/>
        <dbReference type="ChEBI" id="CHEBI:35121"/>
        <dbReference type="ChEBI" id="CHEBI:57540"/>
        <dbReference type="ChEBI" id="CHEBI:57945"/>
        <dbReference type="EC" id="1.1.1.85"/>
    </reaction>
</comment>
<comment type="cofactor">
    <cofactor evidence="1">
        <name>Mg(2+)</name>
        <dbReference type="ChEBI" id="CHEBI:18420"/>
    </cofactor>
    <cofactor evidence="1">
        <name>Mn(2+)</name>
        <dbReference type="ChEBI" id="CHEBI:29035"/>
    </cofactor>
    <text evidence="1">Binds 1 Mg(2+) or Mn(2+) ion per subunit.</text>
</comment>
<comment type="pathway">
    <text>Amino-acid biosynthesis; L-leucine biosynthesis; L-leucine from 3-methyl-2-oxobutanoate: step 3/4.</text>
</comment>
<comment type="subunit">
    <text evidence="1">Homodimer.</text>
</comment>
<comment type="subcellular location">
    <subcellularLocation>
        <location>Cytoplasm</location>
    </subcellularLocation>
</comment>
<comment type="similarity">
    <text evidence="2">Belongs to the isocitrate and isopropylmalate dehydrogenases family.</text>
</comment>
<reference key="1">
    <citation type="journal article" date="1998" name="Appl. Microbiol. Biotechnol.">
        <title>Cloning and disruption of the beta-isopropylmalate dehydrogenase gene (LEU2) of Pichia stipitis with URA3 and recovery of the double auxotroph.</title>
        <authorList>
            <person name="Lu P."/>
            <person name="Davis B.P."/>
            <person name="Hendrick J."/>
            <person name="Jeffries T.W."/>
        </authorList>
    </citation>
    <scope>NUCLEOTIDE SEQUENCE [GENOMIC DNA]</scope>
    <source>
        <strain>ATCC 58785 / CBS 6054 / NBRC 10063 / NRRL Y-11545</strain>
    </source>
</reference>
<reference key="2">
    <citation type="journal article" date="2007" name="Nat. Biotechnol.">
        <title>Genome sequence of the lignocellulose-bioconverting and xylose-fermenting yeast Pichia stipitis.</title>
        <authorList>
            <person name="Jeffries T.W."/>
            <person name="Grigoriev I.V."/>
            <person name="Grimwood J."/>
            <person name="Laplaza J.M."/>
            <person name="Aerts A."/>
            <person name="Salamov A."/>
            <person name="Schmutz J."/>
            <person name="Lindquist E."/>
            <person name="Dehal P."/>
            <person name="Shapiro H."/>
            <person name="Jin Y.-S."/>
            <person name="Passoth V."/>
            <person name="Richardson P.M."/>
        </authorList>
    </citation>
    <scope>NUCLEOTIDE SEQUENCE [LARGE SCALE GENOMIC DNA]</scope>
    <source>
        <strain>ATCC 58785 / CBS 6054 / NBRC 10063 / NRRL Y-11545</strain>
    </source>
</reference>
<name>LEU3_PICST</name>
<protein>
    <recommendedName>
        <fullName>3-isopropylmalate dehydrogenase</fullName>
        <shortName>3-IPM-DH</shortName>
        <shortName>IMDH</shortName>
        <ecNumber>1.1.1.85</ecNumber>
    </recommendedName>
    <alternativeName>
        <fullName>Beta-IPM dehydrogenase</fullName>
    </alternativeName>
</protein>
<keyword id="KW-0028">Amino-acid biosynthesis</keyword>
<keyword id="KW-0100">Branched-chain amino acid biosynthesis</keyword>
<keyword id="KW-0963">Cytoplasm</keyword>
<keyword id="KW-0432">Leucine biosynthesis</keyword>
<keyword id="KW-0460">Magnesium</keyword>
<keyword id="KW-0464">Manganese</keyword>
<keyword id="KW-0479">Metal-binding</keyword>
<keyword id="KW-0520">NAD</keyword>
<keyword id="KW-0560">Oxidoreductase</keyword>
<keyword id="KW-1185">Reference proteome</keyword>
<organism>
    <name type="scientific">Scheffersomyces stipitis (strain ATCC 58785 / CBS 6054 / NBRC 10063 / NRRL Y-11545)</name>
    <name type="common">Yeast</name>
    <name type="synonym">Pichia stipitis</name>
    <dbReference type="NCBI Taxonomy" id="322104"/>
    <lineage>
        <taxon>Eukaryota</taxon>
        <taxon>Fungi</taxon>
        <taxon>Dikarya</taxon>
        <taxon>Ascomycota</taxon>
        <taxon>Saccharomycotina</taxon>
        <taxon>Pichiomycetes</taxon>
        <taxon>Debaryomycetaceae</taxon>
        <taxon>Scheffersomyces</taxon>
    </lineage>
</organism>
<feature type="chain" id="PRO_0000083617" description="3-isopropylmalate dehydrogenase">
    <location>
        <begin position="1"/>
        <end position="373"/>
    </location>
</feature>
<feature type="binding site" evidence="1">
    <location>
        <begin position="82"/>
        <end position="93"/>
    </location>
    <ligand>
        <name>NAD(+)</name>
        <dbReference type="ChEBI" id="CHEBI:57540"/>
    </ligand>
</feature>
<feature type="binding site" evidence="1">
    <location>
        <position position="100"/>
    </location>
    <ligand>
        <name>substrate</name>
    </ligand>
</feature>
<feature type="binding site" evidence="1">
    <location>
        <position position="110"/>
    </location>
    <ligand>
        <name>substrate</name>
    </ligand>
</feature>
<feature type="binding site" evidence="1">
    <location>
        <position position="139"/>
    </location>
    <ligand>
        <name>substrate</name>
    </ligand>
</feature>
<feature type="binding site" evidence="1">
    <location>
        <position position="231"/>
    </location>
    <ligand>
        <name>Mg(2+)</name>
        <dbReference type="ChEBI" id="CHEBI:18420"/>
    </ligand>
</feature>
<feature type="binding site" evidence="1">
    <location>
        <position position="231"/>
    </location>
    <ligand>
        <name>substrate</name>
    </ligand>
</feature>
<feature type="binding site" evidence="1">
    <location>
        <position position="260"/>
    </location>
    <ligand>
        <name>Mg(2+)</name>
        <dbReference type="ChEBI" id="CHEBI:18420"/>
    </ligand>
</feature>
<feature type="binding site" evidence="1">
    <location>
        <begin position="295"/>
        <end position="306"/>
    </location>
    <ligand>
        <name>NAD(+)</name>
        <dbReference type="ChEBI" id="CHEBI:57540"/>
    </ligand>
</feature>
<feature type="site" description="Important for catalysis" evidence="1">
    <location>
        <position position="146"/>
    </location>
</feature>
<feature type="site" description="Important for catalysis" evidence="1">
    <location>
        <position position="198"/>
    </location>
</feature>
<feature type="sequence conflict" description="In Ref. 1; AAD00548." evidence="2" ref="1">
    <original>D</original>
    <variation>Y</variation>
    <location>
        <position position="256"/>
    </location>
</feature>
<feature type="sequence conflict" description="In Ref. 1; AAD00548." evidence="2" ref="1">
    <original>A</original>
    <variation>G</variation>
    <location>
        <position position="364"/>
    </location>
</feature>
<sequence length="373" mass="40019">MSTVTKTITVLPGDHVGTEICNEAIKVLEAIEQATPYQKIHFEFKHHLIGGAAIDSTGVPLPDDSLAAAKSSDAVLLGAVGGPKWGTGAVRPEQGLLKIRKELNLYANLRPCNFASDALLELSPLKSEIVKGTNFTVVRELVGGIYFGERQEQEESADGESAWDTEKYSVAEVTRITRMAAFMALQHNPPLPIWSLDKANVLASSRLWRKTVDKVMKEEFPQLTIQHQLIDSAAMILVQSPTKLNGIVITSNMFGDIISDEASVIPGSLGLLPSASLASLPDTNSAFGLYEPCHGSAPDLPENKVNPIATILSVAMMLRLSLDSLKEAEALEEAVRQVLDSGVRTADLRGTNSTKEVGEAVVAAVTKILKDAA</sequence>
<accession>O94114</accession>
<accession>A3M0K5</accession>
<proteinExistence type="inferred from homology"/>